<protein>
    <recommendedName>
        <fullName evidence="1">Ribosomal RNA small subunit methyltransferase H</fullName>
        <ecNumber evidence="1">2.1.1.199</ecNumber>
    </recommendedName>
    <alternativeName>
        <fullName evidence="1">16S rRNA m(4)C1402 methyltransferase</fullName>
    </alternativeName>
    <alternativeName>
        <fullName evidence="1">rRNA (cytosine-N(4)-)-methyltransferase RsmH</fullName>
    </alternativeName>
</protein>
<dbReference type="EC" id="2.1.1.199" evidence="1"/>
<dbReference type="EMBL" id="AE000520">
    <property type="protein sequence ID" value="AAC65368.1"/>
    <property type="molecule type" value="Genomic_DNA"/>
</dbReference>
<dbReference type="PIR" id="B71331">
    <property type="entry name" value="B71331"/>
</dbReference>
<dbReference type="RefSeq" id="WP_010881832.1">
    <property type="nucleotide sequence ID" value="NC_021490.2"/>
</dbReference>
<dbReference type="SMR" id="O83399"/>
<dbReference type="IntAct" id="O83399">
    <property type="interactions" value="3"/>
</dbReference>
<dbReference type="STRING" id="243276.TP_0384"/>
<dbReference type="EnsemblBacteria" id="AAC65368">
    <property type="protein sequence ID" value="AAC65368"/>
    <property type="gene ID" value="TP_0384"/>
</dbReference>
<dbReference type="GeneID" id="93876158"/>
<dbReference type="KEGG" id="tpa:TP_0384"/>
<dbReference type="KEGG" id="tpw:TPANIC_0384"/>
<dbReference type="eggNOG" id="COG0275">
    <property type="taxonomic scope" value="Bacteria"/>
</dbReference>
<dbReference type="HOGENOM" id="CLU_038422_3_0_12"/>
<dbReference type="OrthoDB" id="9806637at2"/>
<dbReference type="Proteomes" id="UP000000811">
    <property type="component" value="Chromosome"/>
</dbReference>
<dbReference type="GO" id="GO:0005737">
    <property type="term" value="C:cytoplasm"/>
    <property type="evidence" value="ECO:0007669"/>
    <property type="project" value="UniProtKB-SubCell"/>
</dbReference>
<dbReference type="GO" id="GO:0071424">
    <property type="term" value="F:rRNA (cytosine-N4-)-methyltransferase activity"/>
    <property type="evidence" value="ECO:0007669"/>
    <property type="project" value="UniProtKB-UniRule"/>
</dbReference>
<dbReference type="GO" id="GO:0070475">
    <property type="term" value="P:rRNA base methylation"/>
    <property type="evidence" value="ECO:0007669"/>
    <property type="project" value="UniProtKB-UniRule"/>
</dbReference>
<dbReference type="Gene3D" id="1.10.150.170">
    <property type="entry name" value="Putative methyltransferase TM0872, insert domain"/>
    <property type="match status" value="1"/>
</dbReference>
<dbReference type="Gene3D" id="3.40.50.150">
    <property type="entry name" value="Vaccinia Virus protein VP39"/>
    <property type="match status" value="1"/>
</dbReference>
<dbReference type="HAMAP" id="MF_01007">
    <property type="entry name" value="16SrRNA_methyltr_H"/>
    <property type="match status" value="1"/>
</dbReference>
<dbReference type="InterPro" id="IPR002903">
    <property type="entry name" value="RsmH"/>
</dbReference>
<dbReference type="InterPro" id="IPR023397">
    <property type="entry name" value="SAM-dep_MeTrfase_MraW_recog"/>
</dbReference>
<dbReference type="InterPro" id="IPR029063">
    <property type="entry name" value="SAM-dependent_MTases_sf"/>
</dbReference>
<dbReference type="NCBIfam" id="TIGR00006">
    <property type="entry name" value="16S rRNA (cytosine(1402)-N(4))-methyltransferase RsmH"/>
    <property type="match status" value="1"/>
</dbReference>
<dbReference type="PANTHER" id="PTHR11265:SF0">
    <property type="entry name" value="12S RRNA N4-METHYLCYTIDINE METHYLTRANSFERASE"/>
    <property type="match status" value="1"/>
</dbReference>
<dbReference type="PANTHER" id="PTHR11265">
    <property type="entry name" value="S-ADENOSYL-METHYLTRANSFERASE MRAW"/>
    <property type="match status" value="1"/>
</dbReference>
<dbReference type="Pfam" id="PF01795">
    <property type="entry name" value="Methyltransf_5"/>
    <property type="match status" value="1"/>
</dbReference>
<dbReference type="SUPFAM" id="SSF81799">
    <property type="entry name" value="Putative methyltransferase TM0872, insert domain"/>
    <property type="match status" value="1"/>
</dbReference>
<dbReference type="SUPFAM" id="SSF53335">
    <property type="entry name" value="S-adenosyl-L-methionine-dependent methyltransferases"/>
    <property type="match status" value="1"/>
</dbReference>
<name>RSMH_TREPA</name>
<keyword id="KW-0963">Cytoplasm</keyword>
<keyword id="KW-0489">Methyltransferase</keyword>
<keyword id="KW-1185">Reference proteome</keyword>
<keyword id="KW-0698">rRNA processing</keyword>
<keyword id="KW-0949">S-adenosyl-L-methionine</keyword>
<keyword id="KW-0808">Transferase</keyword>
<accession>O83399</accession>
<organism>
    <name type="scientific">Treponema pallidum (strain Nichols)</name>
    <dbReference type="NCBI Taxonomy" id="243276"/>
    <lineage>
        <taxon>Bacteria</taxon>
        <taxon>Pseudomonadati</taxon>
        <taxon>Spirochaetota</taxon>
        <taxon>Spirochaetia</taxon>
        <taxon>Spirochaetales</taxon>
        <taxon>Treponemataceae</taxon>
        <taxon>Treponema</taxon>
    </lineage>
</organism>
<reference key="1">
    <citation type="journal article" date="1998" name="Science">
        <title>Complete genome sequence of Treponema pallidum, the syphilis spirochete.</title>
        <authorList>
            <person name="Fraser C.M."/>
            <person name="Norris S.J."/>
            <person name="Weinstock G.M."/>
            <person name="White O."/>
            <person name="Sutton G.G."/>
            <person name="Dodson R.J."/>
            <person name="Gwinn M.L."/>
            <person name="Hickey E.K."/>
            <person name="Clayton R.A."/>
            <person name="Ketchum K.A."/>
            <person name="Sodergren E."/>
            <person name="Hardham J.M."/>
            <person name="McLeod M.P."/>
            <person name="Salzberg S.L."/>
            <person name="Peterson J.D."/>
            <person name="Khalak H.G."/>
            <person name="Richardson D.L."/>
            <person name="Howell J.K."/>
            <person name="Chidambaram M."/>
            <person name="Utterback T.R."/>
            <person name="McDonald L.A."/>
            <person name="Artiach P."/>
            <person name="Bowman C."/>
            <person name="Cotton M.D."/>
            <person name="Fujii C."/>
            <person name="Garland S.A."/>
            <person name="Hatch B."/>
            <person name="Horst K."/>
            <person name="Roberts K.M."/>
            <person name="Sandusky M."/>
            <person name="Weidman J.F."/>
            <person name="Smith H.O."/>
            <person name="Venter J.C."/>
        </authorList>
    </citation>
    <scope>NUCLEOTIDE SEQUENCE [LARGE SCALE GENOMIC DNA]</scope>
    <source>
        <strain>Nichols</strain>
    </source>
</reference>
<feature type="chain" id="PRO_0000108737" description="Ribosomal RNA small subunit methyltransferase H">
    <location>
        <begin position="1"/>
        <end position="379"/>
    </location>
</feature>
<feature type="binding site" evidence="1">
    <location>
        <begin position="71"/>
        <end position="73"/>
    </location>
    <ligand>
        <name>S-adenosyl-L-methionine</name>
        <dbReference type="ChEBI" id="CHEBI:59789"/>
    </ligand>
</feature>
<feature type="binding site" evidence="1">
    <location>
        <position position="90"/>
    </location>
    <ligand>
        <name>S-adenosyl-L-methionine</name>
        <dbReference type="ChEBI" id="CHEBI:59789"/>
    </ligand>
</feature>
<feature type="binding site" evidence="1">
    <location>
        <position position="157"/>
    </location>
    <ligand>
        <name>S-adenosyl-L-methionine</name>
        <dbReference type="ChEBI" id="CHEBI:59789"/>
    </ligand>
</feature>
<feature type="binding site" evidence="1">
    <location>
        <position position="164"/>
    </location>
    <ligand>
        <name>S-adenosyl-L-methionine</name>
        <dbReference type="ChEBI" id="CHEBI:59789"/>
    </ligand>
</feature>
<comment type="function">
    <text evidence="1">Specifically methylates the N4 position of cytidine in position 1402 (C1402) of 16S rRNA.</text>
</comment>
<comment type="catalytic activity">
    <reaction evidence="1">
        <text>cytidine(1402) in 16S rRNA + S-adenosyl-L-methionine = N(4)-methylcytidine(1402) in 16S rRNA + S-adenosyl-L-homocysteine + H(+)</text>
        <dbReference type="Rhea" id="RHEA:42928"/>
        <dbReference type="Rhea" id="RHEA-COMP:10286"/>
        <dbReference type="Rhea" id="RHEA-COMP:10287"/>
        <dbReference type="ChEBI" id="CHEBI:15378"/>
        <dbReference type="ChEBI" id="CHEBI:57856"/>
        <dbReference type="ChEBI" id="CHEBI:59789"/>
        <dbReference type="ChEBI" id="CHEBI:74506"/>
        <dbReference type="ChEBI" id="CHEBI:82748"/>
        <dbReference type="EC" id="2.1.1.199"/>
    </reaction>
</comment>
<comment type="subcellular location">
    <subcellularLocation>
        <location evidence="1">Cytoplasm</location>
    </subcellularLocation>
</comment>
<comment type="similarity">
    <text evidence="1">Belongs to the methyltransferase superfamily. RsmH family.</text>
</comment>
<proteinExistence type="inferred from homology"/>
<evidence type="ECO:0000255" key="1">
    <source>
        <dbReference type="HAMAP-Rule" id="MF_01007"/>
    </source>
</evidence>
<gene>
    <name evidence="1" type="primary">rsmH</name>
    <name type="synonym">mraW</name>
    <name type="ordered locus">TP_0384</name>
</gene>
<sequence>MSLSGHTHTKEEVQAEVEAGEVQCPALCHQPVLVQECLTLLEPAIVGISRGADSTRDGAGAFFIDGTLGDGGHTQAFLHAYPALRALGVEIDPSMLARARARLTPFGKRLRYVLGWSDVFFASAYASAPASPATGRTAAGAAGVPGAYPAPQAVLLDLGISFFHYRGAMRGFSFAEEHMLDMRLDPQASQTAADLLNRLPQARLAQLFFEGGEERYARRIAQAVCAQRRQAPFCSARAFAEVVARVVPPMRTARFGKRRGVLGVLPKLHPATKAFQALRIAVNRELERLPRLLTAAFTALAPGGRLAVISFHSREDRIVKVHFRHWAKRCSCPARVPICSCGGVARASLITKKPLVPSCVERAANAASRSATLRVIEKR</sequence>